<gene>
    <name type="primary">fib1</name>
    <name type="synonym">fib</name>
    <name type="ORF">SPBC2D10.10c</name>
</gene>
<dbReference type="EC" id="2.1.1.-"/>
<dbReference type="EMBL" id="X69930">
    <property type="protein sequence ID" value="CAA49550.1"/>
    <property type="molecule type" value="Genomic_DNA"/>
</dbReference>
<dbReference type="EMBL" id="CU329671">
    <property type="protein sequence ID" value="CAA21168.1"/>
    <property type="molecule type" value="Genomic_DNA"/>
</dbReference>
<dbReference type="EMBL" id="AB027941">
    <property type="protein sequence ID" value="BAA87245.1"/>
    <property type="molecule type" value="Genomic_DNA"/>
</dbReference>
<dbReference type="PIR" id="S33690">
    <property type="entry name" value="S33690"/>
</dbReference>
<dbReference type="RefSeq" id="NP_596229.1">
    <property type="nucleotide sequence ID" value="NM_001022149.2"/>
</dbReference>
<dbReference type="SMR" id="P35551"/>
<dbReference type="BioGRID" id="277007">
    <property type="interactions" value="15"/>
</dbReference>
<dbReference type="FunCoup" id="P35551">
    <property type="interactions" value="531"/>
</dbReference>
<dbReference type="STRING" id="284812.P35551"/>
<dbReference type="iPTMnet" id="P35551"/>
<dbReference type="PaxDb" id="4896-SPBC2D10.10c.1"/>
<dbReference type="EnsemblFungi" id="SPBC2D10.10c.1">
    <property type="protein sequence ID" value="SPBC2D10.10c.1:pep"/>
    <property type="gene ID" value="SPBC2D10.10c"/>
</dbReference>
<dbReference type="GeneID" id="2540479"/>
<dbReference type="KEGG" id="spo:2540479"/>
<dbReference type="PomBase" id="SPBC2D10.10c">
    <property type="gene designation" value="fib1"/>
</dbReference>
<dbReference type="VEuPathDB" id="FungiDB:SPBC2D10.10c"/>
<dbReference type="eggNOG" id="KOG1596">
    <property type="taxonomic scope" value="Eukaryota"/>
</dbReference>
<dbReference type="HOGENOM" id="CLU_059055_1_0_1"/>
<dbReference type="InParanoid" id="P35551"/>
<dbReference type="OMA" id="WNPNKSK"/>
<dbReference type="PhylomeDB" id="P35551"/>
<dbReference type="Reactome" id="R-SPO-6791226">
    <property type="pathway name" value="Major pathway of rRNA processing in the nucleolus and cytosol"/>
</dbReference>
<dbReference type="PRO" id="PR:P35551"/>
<dbReference type="Proteomes" id="UP000002485">
    <property type="component" value="Chromosome II"/>
</dbReference>
<dbReference type="GO" id="GO:0031428">
    <property type="term" value="C:box C/D methylation guide snoRNP complex"/>
    <property type="evidence" value="ECO:0000318"/>
    <property type="project" value="GO_Central"/>
</dbReference>
<dbReference type="GO" id="GO:0072686">
    <property type="term" value="C:mitotic spindle"/>
    <property type="evidence" value="ECO:0007005"/>
    <property type="project" value="PomBase"/>
</dbReference>
<dbReference type="GO" id="GO:0005730">
    <property type="term" value="C:nucleolus"/>
    <property type="evidence" value="ECO:0007005"/>
    <property type="project" value="PomBase"/>
</dbReference>
<dbReference type="GO" id="GO:0005634">
    <property type="term" value="C:nucleus"/>
    <property type="evidence" value="ECO:0007005"/>
    <property type="project" value="PomBase"/>
</dbReference>
<dbReference type="GO" id="GO:0032040">
    <property type="term" value="C:small-subunit processome"/>
    <property type="evidence" value="ECO:0000314"/>
    <property type="project" value="PomBase"/>
</dbReference>
<dbReference type="GO" id="GO:1990259">
    <property type="term" value="F:histone H2AQ104 methyltransferase activity"/>
    <property type="evidence" value="ECO:0000266"/>
    <property type="project" value="PomBase"/>
</dbReference>
<dbReference type="GO" id="GO:0140517">
    <property type="term" value="F:protein-RNA adaptor activity"/>
    <property type="evidence" value="ECO:0000353"/>
    <property type="project" value="PomBase"/>
</dbReference>
<dbReference type="GO" id="GO:0003723">
    <property type="term" value="F:RNA binding"/>
    <property type="evidence" value="ECO:0000318"/>
    <property type="project" value="GO_Central"/>
</dbReference>
<dbReference type="GO" id="GO:0008649">
    <property type="term" value="F:rRNA methyltransferase activity"/>
    <property type="evidence" value="ECO:0000266"/>
    <property type="project" value="PomBase"/>
</dbReference>
<dbReference type="GO" id="GO:0000494">
    <property type="term" value="P:box C/D sno(s)RNA 3'-end processing"/>
    <property type="evidence" value="ECO:0000318"/>
    <property type="project" value="GO_Central"/>
</dbReference>
<dbReference type="GO" id="GO:0031167">
    <property type="term" value="P:rRNA methylation"/>
    <property type="evidence" value="ECO:0000318"/>
    <property type="project" value="GO_Central"/>
</dbReference>
<dbReference type="GO" id="GO:0000452">
    <property type="term" value="P:snoRNA guided rRNA 2'-O-methylation"/>
    <property type="evidence" value="ECO:0000305"/>
    <property type="project" value="PomBase"/>
</dbReference>
<dbReference type="GO" id="GO:0006360">
    <property type="term" value="P:transcription by RNA polymerase I"/>
    <property type="evidence" value="ECO:0000266"/>
    <property type="project" value="PomBase"/>
</dbReference>
<dbReference type="CDD" id="cd02440">
    <property type="entry name" value="AdoMet_MTases"/>
    <property type="match status" value="1"/>
</dbReference>
<dbReference type="FunFam" id="3.30.200.20:FF:000056">
    <property type="entry name" value="Fibrillarin like 1"/>
    <property type="match status" value="1"/>
</dbReference>
<dbReference type="FunFam" id="3.40.50.150:FF:000001">
    <property type="entry name" value="Fibrillarin like 1"/>
    <property type="match status" value="1"/>
</dbReference>
<dbReference type="Gene3D" id="3.30.200.20">
    <property type="entry name" value="Phosphorylase Kinase, domain 1"/>
    <property type="match status" value="1"/>
</dbReference>
<dbReference type="Gene3D" id="3.40.50.150">
    <property type="entry name" value="Vaccinia Virus protein VP39"/>
    <property type="match status" value="1"/>
</dbReference>
<dbReference type="HAMAP" id="MF_00351">
    <property type="entry name" value="RNA_methyltransf_FlpA"/>
    <property type="match status" value="1"/>
</dbReference>
<dbReference type="InterPro" id="IPR000692">
    <property type="entry name" value="Fibrillarin"/>
</dbReference>
<dbReference type="InterPro" id="IPR020813">
    <property type="entry name" value="Fibrillarin_CS"/>
</dbReference>
<dbReference type="InterPro" id="IPR029063">
    <property type="entry name" value="SAM-dependent_MTases_sf"/>
</dbReference>
<dbReference type="NCBIfam" id="NF003276">
    <property type="entry name" value="PRK04266.1-2"/>
    <property type="match status" value="1"/>
</dbReference>
<dbReference type="PANTHER" id="PTHR10335:SF17">
    <property type="entry name" value="FIBRILLARIN"/>
    <property type="match status" value="1"/>
</dbReference>
<dbReference type="PANTHER" id="PTHR10335">
    <property type="entry name" value="RRNA 2-O-METHYLTRANSFERASE FIBRILLARIN"/>
    <property type="match status" value="1"/>
</dbReference>
<dbReference type="Pfam" id="PF01269">
    <property type="entry name" value="Fibrillarin"/>
    <property type="match status" value="1"/>
</dbReference>
<dbReference type="PIRSF" id="PIRSF006540">
    <property type="entry name" value="Nop17p"/>
    <property type="match status" value="1"/>
</dbReference>
<dbReference type="PRINTS" id="PR00052">
    <property type="entry name" value="FIBRILLARIN"/>
</dbReference>
<dbReference type="SMART" id="SM01206">
    <property type="entry name" value="Fibrillarin"/>
    <property type="match status" value="1"/>
</dbReference>
<dbReference type="SUPFAM" id="SSF53335">
    <property type="entry name" value="S-adenosyl-L-methionine-dependent methyltransferases"/>
    <property type="match status" value="1"/>
</dbReference>
<dbReference type="PROSITE" id="PS00566">
    <property type="entry name" value="FIBRILLARIN"/>
    <property type="match status" value="1"/>
</dbReference>
<protein>
    <recommendedName>
        <fullName>rRNA 2'-O-methyltransferase fibrillarin</fullName>
        <ecNumber>2.1.1.-</ecNumber>
    </recommendedName>
    <alternativeName>
        <fullName>Histone-glutamine methyltransferase</fullName>
    </alternativeName>
</protein>
<organism>
    <name type="scientific">Schizosaccharomyces pombe (strain 972 / ATCC 24843)</name>
    <name type="common">Fission yeast</name>
    <dbReference type="NCBI Taxonomy" id="284812"/>
    <lineage>
        <taxon>Eukaryota</taxon>
        <taxon>Fungi</taxon>
        <taxon>Dikarya</taxon>
        <taxon>Ascomycota</taxon>
        <taxon>Taphrinomycotina</taxon>
        <taxon>Schizosaccharomycetes</taxon>
        <taxon>Schizosaccharomycetales</taxon>
        <taxon>Schizosaccharomycetaceae</taxon>
        <taxon>Schizosaccharomyces</taxon>
    </lineage>
</organism>
<name>FBRL_SCHPO</name>
<comment type="function">
    <text evidence="1">S-adenosyl-L-methionine-dependent methyltransferase that has the ability to methylate both RNAs and proteins. Involved in pre-rRNA processing by catalyzing the site-specific 2'-hydroxyl methylation of ribose moieties in pre-ribosomal RNA. Site specificity is provided by a guide RNA that base pairs with the substrate. Methylation occurs at a characteristic distance from the sequence involved in base pairing with the guide RNA. Also acts as a protein methyltransferase by mediating methylation of 'Gln-105' of histone H2A (H2AQ105me), a modification that impairs binding of the FACT complex and is specifically present at 35S ribosomal DNA locus (By similarity).</text>
</comment>
<comment type="catalytic activity">
    <reaction>
        <text>L-glutaminyl-[histone H2A] + S-adenosyl-L-methionine = N(5)-methyl-L-glutaminyl-[histone H2A] + S-adenosyl-L-homocysteine + H(+)</text>
        <dbReference type="Rhea" id="RHEA:50904"/>
        <dbReference type="Rhea" id="RHEA-COMP:12837"/>
        <dbReference type="Rhea" id="RHEA-COMP:12839"/>
        <dbReference type="ChEBI" id="CHEBI:15378"/>
        <dbReference type="ChEBI" id="CHEBI:30011"/>
        <dbReference type="ChEBI" id="CHEBI:57856"/>
        <dbReference type="ChEBI" id="CHEBI:59789"/>
        <dbReference type="ChEBI" id="CHEBI:61891"/>
    </reaction>
</comment>
<comment type="subunit">
    <text evidence="1">Component of box C/D small nucleolar ribonucleoprotein (snoRNP) particles.</text>
</comment>
<comment type="subcellular location">
    <subcellularLocation>
        <location evidence="3">Nucleus</location>
        <location evidence="3">Nucleolus</location>
    </subcellularLocation>
    <text>Fibrillar region of the nucleolus.</text>
</comment>
<comment type="PTM">
    <text>By homology to other fibrillarins, some or all of the N-terminal domain arginines are modified to asymmetric dimethylarginine (DMA).</text>
</comment>
<comment type="similarity">
    <text evidence="5">Belongs to the methyltransferase superfamily. Fibrillarin family.</text>
</comment>
<sequence length="305" mass="32040">MAYTPGSRGGRGGSRGGRGGFNGGRGGFGGGRGGARGGGRGGARGGRGGRGGARGGRGGSSGGRGGAKGGAKVIIEPHRHAGVFIARGKEDLLVTRNLVPGESVYNEKRISVDSPDGTKVEYRVWNPFRSKLAAGILGGLDNIYIKPGARVLYLGAANGTSVSHVADVVGPEGLVYAVEFSHRSGRDLLNMAKKRTNVIPIVEDARHVQKYRMLVGMVDVVFADVAQPDQARIVALNAAAFLKNEGGVVISVKASCIDSTADAAVVFAREVKKMQEEKIKPQEQLTLEPYERDHCIIVGKYLRHQ</sequence>
<proteinExistence type="evidence at protein level"/>
<keyword id="KW-0489">Methyltransferase</keyword>
<keyword id="KW-0539">Nucleus</keyword>
<keyword id="KW-0597">Phosphoprotein</keyword>
<keyword id="KW-1185">Reference proteome</keyword>
<keyword id="KW-0687">Ribonucleoprotein</keyword>
<keyword id="KW-0694">RNA-binding</keyword>
<keyword id="KW-0698">rRNA processing</keyword>
<keyword id="KW-0949">S-adenosyl-L-methionine</keyword>
<keyword id="KW-0808">Transferase</keyword>
<evidence type="ECO:0000250" key="1"/>
<evidence type="ECO:0000256" key="2">
    <source>
        <dbReference type="SAM" id="MobiDB-lite"/>
    </source>
</evidence>
<evidence type="ECO:0000269" key="3">
    <source>
    </source>
</evidence>
<evidence type="ECO:0000269" key="4">
    <source>
    </source>
</evidence>
<evidence type="ECO:0000305" key="5"/>
<reference key="1">
    <citation type="journal article" date="1993" name="Nucleic Acids Res.">
        <title>Study of multiple fibrillarin mRNAs reveals that 3' end formation in Schizosaccharomyces pombe is sensitive to cold shock.</title>
        <authorList>
            <person name="Girard J.-P."/>
            <person name="Feliu J."/>
            <person name="Caizergues-Ferrer M."/>
            <person name="Lapeyre B."/>
        </authorList>
    </citation>
    <scope>NUCLEOTIDE SEQUENCE [GENOMIC DNA]</scope>
    <source>
        <strain>972 / ATCC 24843</strain>
    </source>
</reference>
<reference key="2">
    <citation type="journal article" date="2002" name="Nature">
        <title>The genome sequence of Schizosaccharomyces pombe.</title>
        <authorList>
            <person name="Wood V."/>
            <person name="Gwilliam R."/>
            <person name="Rajandream M.A."/>
            <person name="Lyne M.H."/>
            <person name="Lyne R."/>
            <person name="Stewart A."/>
            <person name="Sgouros J.G."/>
            <person name="Peat N."/>
            <person name="Hayles J."/>
            <person name="Baker S.G."/>
            <person name="Basham D."/>
            <person name="Bowman S."/>
            <person name="Brooks K."/>
            <person name="Brown D."/>
            <person name="Brown S."/>
            <person name="Chillingworth T."/>
            <person name="Churcher C.M."/>
            <person name="Collins M."/>
            <person name="Connor R."/>
            <person name="Cronin A."/>
            <person name="Davis P."/>
            <person name="Feltwell T."/>
            <person name="Fraser A."/>
            <person name="Gentles S."/>
            <person name="Goble A."/>
            <person name="Hamlin N."/>
            <person name="Harris D.E."/>
            <person name="Hidalgo J."/>
            <person name="Hodgson G."/>
            <person name="Holroyd S."/>
            <person name="Hornsby T."/>
            <person name="Howarth S."/>
            <person name="Huckle E.J."/>
            <person name="Hunt S."/>
            <person name="Jagels K."/>
            <person name="James K.D."/>
            <person name="Jones L."/>
            <person name="Jones M."/>
            <person name="Leather S."/>
            <person name="McDonald S."/>
            <person name="McLean J."/>
            <person name="Mooney P."/>
            <person name="Moule S."/>
            <person name="Mungall K.L."/>
            <person name="Murphy L.D."/>
            <person name="Niblett D."/>
            <person name="Odell C."/>
            <person name="Oliver K."/>
            <person name="O'Neil S."/>
            <person name="Pearson D."/>
            <person name="Quail M.A."/>
            <person name="Rabbinowitsch E."/>
            <person name="Rutherford K.M."/>
            <person name="Rutter S."/>
            <person name="Saunders D."/>
            <person name="Seeger K."/>
            <person name="Sharp S."/>
            <person name="Skelton J."/>
            <person name="Simmonds M.N."/>
            <person name="Squares R."/>
            <person name="Squares S."/>
            <person name="Stevens K."/>
            <person name="Taylor K."/>
            <person name="Taylor R.G."/>
            <person name="Tivey A."/>
            <person name="Walsh S.V."/>
            <person name="Warren T."/>
            <person name="Whitehead S."/>
            <person name="Woodward J.R."/>
            <person name="Volckaert G."/>
            <person name="Aert R."/>
            <person name="Robben J."/>
            <person name="Grymonprez B."/>
            <person name="Weltjens I."/>
            <person name="Vanstreels E."/>
            <person name="Rieger M."/>
            <person name="Schaefer M."/>
            <person name="Mueller-Auer S."/>
            <person name="Gabel C."/>
            <person name="Fuchs M."/>
            <person name="Duesterhoeft A."/>
            <person name="Fritzc C."/>
            <person name="Holzer E."/>
            <person name="Moestl D."/>
            <person name="Hilbert H."/>
            <person name="Borzym K."/>
            <person name="Langer I."/>
            <person name="Beck A."/>
            <person name="Lehrach H."/>
            <person name="Reinhardt R."/>
            <person name="Pohl T.M."/>
            <person name="Eger P."/>
            <person name="Zimmermann W."/>
            <person name="Wedler H."/>
            <person name="Wambutt R."/>
            <person name="Purnelle B."/>
            <person name="Goffeau A."/>
            <person name="Cadieu E."/>
            <person name="Dreano S."/>
            <person name="Gloux S."/>
            <person name="Lelaure V."/>
            <person name="Mottier S."/>
            <person name="Galibert F."/>
            <person name="Aves S.J."/>
            <person name="Xiang Z."/>
            <person name="Hunt C."/>
            <person name="Moore K."/>
            <person name="Hurst S.M."/>
            <person name="Lucas M."/>
            <person name="Rochet M."/>
            <person name="Gaillardin C."/>
            <person name="Tallada V.A."/>
            <person name="Garzon A."/>
            <person name="Thode G."/>
            <person name="Daga R.R."/>
            <person name="Cruzado L."/>
            <person name="Jimenez J."/>
            <person name="Sanchez M."/>
            <person name="del Rey F."/>
            <person name="Benito J."/>
            <person name="Dominguez A."/>
            <person name="Revuelta J.L."/>
            <person name="Moreno S."/>
            <person name="Armstrong J."/>
            <person name="Forsburg S.L."/>
            <person name="Cerutti L."/>
            <person name="Lowe T."/>
            <person name="McCombie W.R."/>
            <person name="Paulsen I."/>
            <person name="Potashkin J."/>
            <person name="Shpakovski G.V."/>
            <person name="Ussery D."/>
            <person name="Barrell B.G."/>
            <person name="Nurse P."/>
        </authorList>
    </citation>
    <scope>NUCLEOTIDE SEQUENCE [LARGE SCALE GENOMIC DNA]</scope>
    <source>
        <strain>972 / ATCC 24843</strain>
    </source>
</reference>
<reference key="3">
    <citation type="journal article" date="2000" name="Genes Cells">
        <title>Large-scale screening of intracellular protein localization in living fission yeast cells by the use of a GFP-fusion genomic DNA library.</title>
        <authorList>
            <person name="Ding D.-Q."/>
            <person name="Tomita Y."/>
            <person name="Yamamoto A."/>
            <person name="Chikashige Y."/>
            <person name="Haraguchi T."/>
            <person name="Hiraoka Y."/>
        </authorList>
    </citation>
    <scope>NUCLEOTIDE SEQUENCE [LARGE SCALE GENOMIC DNA] OF 248-293</scope>
    <scope>SUBCELLULAR LOCATION</scope>
    <source>
        <strain>ATCC 38364 / 968</strain>
    </source>
</reference>
<reference key="4">
    <citation type="journal article" date="2008" name="J. Proteome Res.">
        <title>Phosphoproteome analysis of fission yeast.</title>
        <authorList>
            <person name="Wilson-Grady J.T."/>
            <person name="Villen J."/>
            <person name="Gygi S.P."/>
        </authorList>
    </citation>
    <scope>PHOSPHORYLATION [LARGE SCALE ANALYSIS] AT SER-111 AND SER-114</scope>
    <scope>IDENTIFICATION BY MASS SPECTROMETRY</scope>
</reference>
<accession>P35551</accession>
<accession>Q9UTX6</accession>
<feature type="chain" id="PRO_0000148526" description="rRNA 2'-O-methyltransferase fibrillarin">
    <location>
        <begin position="1"/>
        <end position="305"/>
    </location>
</feature>
<feature type="region of interest" description="Disordered" evidence="2">
    <location>
        <begin position="1"/>
        <end position="70"/>
    </location>
</feature>
<feature type="compositionally biased region" description="Gly residues" evidence="2">
    <location>
        <begin position="7"/>
        <end position="69"/>
    </location>
</feature>
<feature type="binding site" evidence="1">
    <location>
        <begin position="160"/>
        <end position="161"/>
    </location>
    <ligand>
        <name>S-adenosyl-L-methionine</name>
        <dbReference type="ChEBI" id="CHEBI:59789"/>
    </ligand>
</feature>
<feature type="binding site" evidence="1">
    <location>
        <begin position="179"/>
        <end position="180"/>
    </location>
    <ligand>
        <name>S-adenosyl-L-methionine</name>
        <dbReference type="ChEBI" id="CHEBI:59789"/>
    </ligand>
</feature>
<feature type="binding site" evidence="1">
    <location>
        <begin position="204"/>
        <end position="205"/>
    </location>
    <ligand>
        <name>S-adenosyl-L-methionine</name>
        <dbReference type="ChEBI" id="CHEBI:59789"/>
    </ligand>
</feature>
<feature type="binding site" evidence="1">
    <location>
        <begin position="224"/>
        <end position="227"/>
    </location>
    <ligand>
        <name>S-adenosyl-L-methionine</name>
        <dbReference type="ChEBI" id="CHEBI:59789"/>
    </ligand>
</feature>
<feature type="modified residue" description="Phosphoserine" evidence="4">
    <location>
        <position position="111"/>
    </location>
</feature>
<feature type="modified residue" description="Phosphoserine" evidence="4">
    <location>
        <position position="114"/>
    </location>
</feature>